<gene>
    <name evidence="1" type="primary">pyrC</name>
    <name type="ordered locus">SACOL1213</name>
</gene>
<feature type="chain" id="PRO_0000147246" description="Dihydroorotase">
    <location>
        <begin position="1"/>
        <end position="424"/>
    </location>
</feature>
<feature type="active site" evidence="1">
    <location>
        <position position="303"/>
    </location>
</feature>
<feature type="binding site" evidence="2 4">
    <location>
        <position position="58"/>
    </location>
    <ligand>
        <name>Zn(2+)</name>
        <dbReference type="ChEBI" id="CHEBI:29105"/>
    </ligand>
</feature>
<feature type="binding site" evidence="1">
    <location>
        <begin position="60"/>
        <end position="62"/>
    </location>
    <ligand>
        <name>substrate</name>
    </ligand>
</feature>
<feature type="binding site" evidence="2 4">
    <location>
        <position position="60"/>
    </location>
    <ligand>
        <name>Zn(2+)</name>
        <dbReference type="ChEBI" id="CHEBI:29105"/>
    </ligand>
</feature>
<feature type="binding site" evidence="1">
    <location>
        <position position="92"/>
    </location>
    <ligand>
        <name>substrate</name>
    </ligand>
</feature>
<feature type="binding site" evidence="1">
    <location>
        <position position="276"/>
    </location>
    <ligand>
        <name>substrate</name>
    </ligand>
</feature>
<feature type="binding site" evidence="2 4">
    <location>
        <position position="303"/>
    </location>
    <ligand>
        <name>Zn(2+)</name>
        <dbReference type="ChEBI" id="CHEBI:29105"/>
    </ligand>
</feature>
<feature type="binding site" evidence="1">
    <location>
        <position position="307"/>
    </location>
    <ligand>
        <name>substrate</name>
    </ligand>
</feature>
<feature type="binding site" evidence="1">
    <location>
        <begin position="321"/>
        <end position="322"/>
    </location>
    <ligand>
        <name>substrate</name>
    </ligand>
</feature>
<protein>
    <recommendedName>
        <fullName evidence="1">Dihydroorotase</fullName>
        <shortName evidence="1">DHOase</shortName>
        <ecNumber evidence="1">3.5.2.3</ecNumber>
    </recommendedName>
</protein>
<accession>Q5HGN1</accession>
<comment type="function">
    <text evidence="1">Catalyzes the reversible cyclization of carbamoyl aspartate to dihydroorotate.</text>
</comment>
<comment type="catalytic activity">
    <reaction evidence="1">
        <text>(S)-dihydroorotate + H2O = N-carbamoyl-L-aspartate + H(+)</text>
        <dbReference type="Rhea" id="RHEA:24296"/>
        <dbReference type="ChEBI" id="CHEBI:15377"/>
        <dbReference type="ChEBI" id="CHEBI:15378"/>
        <dbReference type="ChEBI" id="CHEBI:30864"/>
        <dbReference type="ChEBI" id="CHEBI:32814"/>
        <dbReference type="EC" id="3.5.2.3"/>
    </reaction>
</comment>
<comment type="cofactor">
    <cofactor evidence="1 2">
        <name>Zn(2+)</name>
        <dbReference type="ChEBI" id="CHEBI:29105"/>
    </cofactor>
    <text evidence="2">Binds 1 Zn(2+) ions per subunit.</text>
</comment>
<comment type="pathway">
    <text evidence="1">Pyrimidine metabolism; UMP biosynthesis via de novo pathway; (S)-dihydroorotate from bicarbonate: step 3/3.</text>
</comment>
<comment type="similarity">
    <text evidence="1 3">Belongs to the metallo-dependent hydrolases superfamily. DHOase family. Class I DHOase subfamily.</text>
</comment>
<keyword id="KW-0002">3D-structure</keyword>
<keyword id="KW-0378">Hydrolase</keyword>
<keyword id="KW-0479">Metal-binding</keyword>
<keyword id="KW-0665">Pyrimidine biosynthesis</keyword>
<keyword id="KW-0862">Zinc</keyword>
<reference key="1">
    <citation type="journal article" date="2005" name="J. Bacteriol.">
        <title>Insights on evolution of virulence and resistance from the complete genome analysis of an early methicillin-resistant Staphylococcus aureus strain and a biofilm-producing methicillin-resistant Staphylococcus epidermidis strain.</title>
        <authorList>
            <person name="Gill S.R."/>
            <person name="Fouts D.E."/>
            <person name="Archer G.L."/>
            <person name="Mongodin E.F."/>
            <person name="DeBoy R.T."/>
            <person name="Ravel J."/>
            <person name="Paulsen I.T."/>
            <person name="Kolonay J.F."/>
            <person name="Brinkac L.M."/>
            <person name="Beanan M.J."/>
            <person name="Dodson R.J."/>
            <person name="Daugherty S.C."/>
            <person name="Madupu R."/>
            <person name="Angiuoli S.V."/>
            <person name="Durkin A.S."/>
            <person name="Haft D.H."/>
            <person name="Vamathevan J.J."/>
            <person name="Khouri H."/>
            <person name="Utterback T.R."/>
            <person name="Lee C."/>
            <person name="Dimitrov G."/>
            <person name="Jiang L."/>
            <person name="Qin H."/>
            <person name="Weidman J."/>
            <person name="Tran K."/>
            <person name="Kang K.H."/>
            <person name="Hance I.R."/>
            <person name="Nelson K.E."/>
            <person name="Fraser C.M."/>
        </authorList>
    </citation>
    <scope>NUCLEOTIDE SEQUENCE [LARGE SCALE GENOMIC DNA]</scope>
    <source>
        <strain>COL</strain>
    </source>
</reference>
<reference evidence="4" key="2">
    <citation type="submission" date="2009-03" db="PDB data bank">
        <title>The crystal structure of a dihydroorotase from Staphylococcus aureus.</title>
        <authorList>
            <person name="Brunzelle J.S."/>
            <person name="Wawrzak Z."/>
            <person name="Skarina T."/>
            <person name="Onopriyenko O."/>
            <person name="Savchenko A."/>
            <person name="Anderson W.F."/>
        </authorList>
    </citation>
    <scope>X-RAY CRYSTALLOGRAPHY (2.00 ANGSTROMS) IN COMPLEX WITH ZINC</scope>
    <scope>COFACTOR</scope>
    <source>
        <strain>COL</strain>
    </source>
</reference>
<name>PYRC_STAAC</name>
<dbReference type="EC" id="3.5.2.3" evidence="1"/>
<dbReference type="EMBL" id="CP000046">
    <property type="protein sequence ID" value="AAW38050.1"/>
    <property type="molecule type" value="Genomic_DNA"/>
</dbReference>
<dbReference type="RefSeq" id="WP_000767028.1">
    <property type="nucleotide sequence ID" value="NZ_JBGOFO010000002.1"/>
</dbReference>
<dbReference type="PDB" id="3GRI">
    <property type="method" value="X-ray"/>
    <property type="resolution" value="2.00 A"/>
    <property type="chains" value="A/B=1-424"/>
</dbReference>
<dbReference type="PDBsum" id="3GRI"/>
<dbReference type="SMR" id="Q5HGN1"/>
<dbReference type="KEGG" id="sac:SACOL1213"/>
<dbReference type="HOGENOM" id="CLU_015572_1_0_9"/>
<dbReference type="UniPathway" id="UPA00070">
    <property type="reaction ID" value="UER00117"/>
</dbReference>
<dbReference type="Proteomes" id="UP000000530">
    <property type="component" value="Chromosome"/>
</dbReference>
<dbReference type="GO" id="GO:0005737">
    <property type="term" value="C:cytoplasm"/>
    <property type="evidence" value="ECO:0007669"/>
    <property type="project" value="TreeGrafter"/>
</dbReference>
<dbReference type="GO" id="GO:0004038">
    <property type="term" value="F:allantoinase activity"/>
    <property type="evidence" value="ECO:0007669"/>
    <property type="project" value="TreeGrafter"/>
</dbReference>
<dbReference type="GO" id="GO:0004151">
    <property type="term" value="F:dihydroorotase activity"/>
    <property type="evidence" value="ECO:0007669"/>
    <property type="project" value="UniProtKB-UniRule"/>
</dbReference>
<dbReference type="GO" id="GO:0008270">
    <property type="term" value="F:zinc ion binding"/>
    <property type="evidence" value="ECO:0007669"/>
    <property type="project" value="UniProtKB-UniRule"/>
</dbReference>
<dbReference type="GO" id="GO:0044205">
    <property type="term" value="P:'de novo' UMP biosynthetic process"/>
    <property type="evidence" value="ECO:0007669"/>
    <property type="project" value="UniProtKB-UniRule"/>
</dbReference>
<dbReference type="GO" id="GO:0006145">
    <property type="term" value="P:purine nucleobase catabolic process"/>
    <property type="evidence" value="ECO:0007669"/>
    <property type="project" value="TreeGrafter"/>
</dbReference>
<dbReference type="CDD" id="cd01317">
    <property type="entry name" value="DHOase_IIa"/>
    <property type="match status" value="1"/>
</dbReference>
<dbReference type="Gene3D" id="3.20.20.140">
    <property type="entry name" value="Metal-dependent hydrolases"/>
    <property type="match status" value="1"/>
</dbReference>
<dbReference type="Gene3D" id="2.30.40.10">
    <property type="entry name" value="Urease, subunit C, domain 1"/>
    <property type="match status" value="2"/>
</dbReference>
<dbReference type="HAMAP" id="MF_00220_B">
    <property type="entry name" value="PyrC_classI_B"/>
    <property type="match status" value="1"/>
</dbReference>
<dbReference type="InterPro" id="IPR006680">
    <property type="entry name" value="Amidohydro-rel"/>
</dbReference>
<dbReference type="InterPro" id="IPR004722">
    <property type="entry name" value="DHOase"/>
</dbReference>
<dbReference type="InterPro" id="IPR050138">
    <property type="entry name" value="DHOase/Allantoinase_Hydrolase"/>
</dbReference>
<dbReference type="InterPro" id="IPR002195">
    <property type="entry name" value="Dihydroorotase_CS"/>
</dbReference>
<dbReference type="InterPro" id="IPR011059">
    <property type="entry name" value="Metal-dep_hydrolase_composite"/>
</dbReference>
<dbReference type="InterPro" id="IPR032466">
    <property type="entry name" value="Metal_Hydrolase"/>
</dbReference>
<dbReference type="NCBIfam" id="NF006837">
    <property type="entry name" value="PRK09357.1-2"/>
    <property type="match status" value="1"/>
</dbReference>
<dbReference type="NCBIfam" id="TIGR00857">
    <property type="entry name" value="pyrC_multi"/>
    <property type="match status" value="1"/>
</dbReference>
<dbReference type="PANTHER" id="PTHR43668">
    <property type="entry name" value="ALLANTOINASE"/>
    <property type="match status" value="1"/>
</dbReference>
<dbReference type="PANTHER" id="PTHR43668:SF2">
    <property type="entry name" value="ALLANTOINASE"/>
    <property type="match status" value="1"/>
</dbReference>
<dbReference type="Pfam" id="PF01979">
    <property type="entry name" value="Amidohydro_1"/>
    <property type="match status" value="1"/>
</dbReference>
<dbReference type="SUPFAM" id="SSF51338">
    <property type="entry name" value="Composite domain of metallo-dependent hydrolases"/>
    <property type="match status" value="1"/>
</dbReference>
<dbReference type="SUPFAM" id="SSF51556">
    <property type="entry name" value="Metallo-dependent hydrolases"/>
    <property type="match status" value="1"/>
</dbReference>
<dbReference type="PROSITE" id="PS00482">
    <property type="entry name" value="DIHYDROOROTASE_1"/>
    <property type="match status" value="1"/>
</dbReference>
<dbReference type="PROSITE" id="PS00483">
    <property type="entry name" value="DIHYDROOROTASE_2"/>
    <property type="match status" value="1"/>
</dbReference>
<evidence type="ECO:0000255" key="1">
    <source>
        <dbReference type="HAMAP-Rule" id="MF_00220"/>
    </source>
</evidence>
<evidence type="ECO:0000269" key="2">
    <source ref="2"/>
</evidence>
<evidence type="ECO:0000305" key="3"/>
<evidence type="ECO:0007744" key="4">
    <source>
        <dbReference type="PDB" id="3GRI"/>
    </source>
</evidence>
<proteinExistence type="evidence at protein level"/>
<organism>
    <name type="scientific">Staphylococcus aureus (strain COL)</name>
    <dbReference type="NCBI Taxonomy" id="93062"/>
    <lineage>
        <taxon>Bacteria</taxon>
        <taxon>Bacillati</taxon>
        <taxon>Bacillota</taxon>
        <taxon>Bacilli</taxon>
        <taxon>Bacillales</taxon>
        <taxon>Staphylococcaceae</taxon>
        <taxon>Staphylococcus</taxon>
    </lineage>
</organism>
<sequence length="424" mass="46372">MKLIKNGKVLQNGELQQADILIDGKVIKQIAPAIEPSNGVDIIDAKGHFVSPGFVDVHVHLREPGGEYKETIETGTKAAARGGFTTVCPMPNTRPVPDSVEHFEALQKLIDDNAQVRVLPYASITTRQLGKELVDFPALVKEGAFAFTDDGVGVQTASMMYEGMIEAAKVNKAIVAHCEDNSLIYGGAMHEGKRSKELGIPGIPNICESVQIARDVLLAEAAGCHYHVCHVSTKESVRVIRDAKRAGIHVTAEVTPHHLLLTEDDIPGNNAIYKMNPPLRSTEDREALLEGLLDGTIDCIATDHAPHARDEKAQPMEKAPFGIVGSETAFPLLYTHFVKNGDWTLQQLVDYLTIKPCETFNLEYGTLKENGYADLTIIDLDSEQEIKGEDFLSKADNTPFIGYKVYGNPILTMVEGEVKFEGDK</sequence>